<protein>
    <recommendedName>
        <fullName evidence="4">Transcription factor sdnS</fullName>
    </recommendedName>
    <alternativeName>
        <fullName evidence="4">Sordarin/hypoxysordarin biosynthesis cluster protein S</fullName>
    </alternativeName>
</protein>
<sequence>MTEQAQREAELKRRKVRKGTHSCWECRRRKIRCQFGAGNDTVCLPCQARGSTCRSQEYVDKDARPSQQPDRRMAQRLGRLEELMARLVDRILPEAGGQLANRSTTQSNRGSRSPSPDSAQNEGLAFHQTLDVLEASLGPNTPAGLLLGLRDAAQPASMLTPESDHSPAPSKLTPSRNSKTSRSLYALFPPQEALPVLMKANAGPYYLTSLFSSFRDLIEGKVETANSVTVIPPAVSHPTVLARRLLQICICMQQLNPGYDTSPLQIKGTIPEYMNNVVTTVTNLVTSIDEIVSTGEGLESLVLLGLWHANAGNLRKAWLTYRRALSLGQLMGIDRGSTRALKFVDTNTDPQKHSTPAGLWYRINACDRASSLLLGLPAGDLDNSFATEEAMKRDTAMERLEKIHVVLTGRIIERNATRSSSEAYAVTQSIDSELERAATSMGADWWSEPDFDVTDETGHKLGEMLRQMLQMRHFDLLILLHLPYMLRDPSENRYDYSKTTCARSSREVLKRFIPFRSKVTAAWACRHVDYSALVASMTLLVGYLRQHQHATEPAPTCKERNEDRKLIEVVRERMQHVAITNRDKVTQESADILGQMMPILDLIDRSLMGDLSECNSHVLKCLHLKVPYLGTINFHPNVNVPEGQSANTPYSRRDNAGTIPGPVSVAGAATSGLEQLQPRMAGLSTAHDAAMPSVTAMSQGGDSMQVDMATFDPALLPPDTSIDGMYMDFDEQPQDGVHEIPDLMAGVEDWVLQGLDTTYWSLLNGNNMAWGG</sequence>
<gene>
    <name evidence="4" type="primary">sdnS</name>
</gene>
<accession>A0A1B4XBH9</accession>
<feature type="chain" id="PRO_0000441066" description="Transcription factor sdnS">
    <location>
        <begin position="1"/>
        <end position="772"/>
    </location>
</feature>
<feature type="DNA-binding region" description="Zn(2)-C6 fungal-type" evidence="1">
    <location>
        <begin position="23"/>
        <end position="53"/>
    </location>
</feature>
<feature type="region of interest" description="Disordered" evidence="2">
    <location>
        <begin position="94"/>
        <end position="121"/>
    </location>
</feature>
<feature type="region of interest" description="Disordered" evidence="2">
    <location>
        <begin position="156"/>
        <end position="180"/>
    </location>
</feature>
<feature type="compositionally biased region" description="Polar residues" evidence="2">
    <location>
        <begin position="100"/>
        <end position="121"/>
    </location>
</feature>
<evidence type="ECO:0000255" key="1">
    <source>
        <dbReference type="PROSITE-ProRule" id="PRU00227"/>
    </source>
</evidence>
<evidence type="ECO:0000256" key="2">
    <source>
        <dbReference type="SAM" id="MobiDB-lite"/>
    </source>
</evidence>
<evidence type="ECO:0000269" key="3">
    <source>
    </source>
</evidence>
<evidence type="ECO:0000303" key="4">
    <source>
    </source>
</evidence>
<evidence type="ECO:0000305" key="5">
    <source>
    </source>
</evidence>
<proteinExistence type="inferred from homology"/>
<keyword id="KW-0045">Antibiotic biosynthesis</keyword>
<keyword id="KW-0238">DNA-binding</keyword>
<keyword id="KW-0479">Metal-binding</keyword>
<keyword id="KW-0539">Nucleus</keyword>
<keyword id="KW-0804">Transcription</keyword>
<keyword id="KW-0805">Transcription regulation</keyword>
<keyword id="KW-0862">Zinc</keyword>
<comment type="function">
    <text evidence="3">Transcription factor; part of the gene cluster that mediates the biosynthesis of sordarin and hypoxysordarin, glycoside antibiotics with a unique tetracyclic diterpene aglycone structure (PubMed:27072286). First, the geranylgeranyl diphosphate synthase sdnC constructs GGDP from farnesyl diphosphate and isopentenyl diphosphate (PubMed:27072286). The diterpene cyclase sdnA then catalyzes the cyclization of GGDP to afford cycloaraneosene (PubMed:27072286). Cycloaraneosene is then hydroxylated four times by the putative cytochrome P450 monooxygenases sdnB, sdnE, sdnF and sdnH to give a hydroxylated cycloaraneosene derivative such as cycloaraneosene-8,9,13,19-tetraol (PubMed:27072286). Although the order of the hydroxylations is unclear, at least C8, C9 and C13 of the cycloaraneosene skeleton are hydroxylated before the sordaricin formation (PubMed:27072286). Dehydration of the 13-hydroxy group of the hydroxylated cycloaraneosene derivative might be catalyzed by an unassigned hypothetical protein such as sdnG and sdnP to construct the cyclopentadiene moiety (PubMed:27072286). The FAD-dependent oxidoreductase sdnN is proposed to catalyze the oxidation at C9 of the hydroxylated cycloaraneosene derivative and also catalyze the Baeyer-Villiger oxidation to give the lactone intermediate (PubMed:27072286). The presumed lactone intermediate would be hydrolyzed to give an acrolein moiety and a carboxylate moiety (PubMed:27072286). Then, [4+2]cycloaddition would occur between the acrolein moiety and the cyclopentadiene moiety to give sordaricin (PubMed:27072286). SdnN might also be involved in the [4+2]cycloaddition after the hypothesized oxidation to accommodate the oxidized product and prompt the [4+2]cycloaddition (PubMed:27072286). GDP-6-deoxy-D-altrose may be biosynthesized from GDP-D-mannose by the putative GDP-mannose-4,6-dehydratase sdnI and the short-chain dehydrogenase sdnK (PubMed:27072286). The glycosyltransferase sdnJ catalyzes the attachment of 6-deoxy-D-altrose onto the 19-hydroxy group of sordaricin to give 4'-O-demethylsordarin (PubMed:27072286). The methyltransferase sdnD would complete the biosynthesis of sordarin (PubMed:27072286). Sordarin can be further modified into hypoxysordarin (PubMed:27072286). The unique acyl chain at the 3'-hydroxy group of hypoxysordarin would be constructed by an iterative type I PKS sdnO and the trans-acting polyketide methyltransferase sdnL. SdnL would be responsible for the introduction of an alpha-methyl group of the polyketide chain (PubMed:27072286). Alternatively, the beta-lactamase-like protein sdnR might be responsible for the cleavage and transfer of the polyketide chain from the PKS sdnO to sordarin (PubMed:27072286). Two putative cytochrome P450 monooxygenases, sdnQ and sdnT, might catalyze the epoxidations of the polyketide chain to complete the biosynthesis of hypoxysordarin (PubMed:27072286). Transcriptional regulators sdnM and sdnS are presumably encoded for the transcriptional regulation of the expression of the sdn gene cluster (PubMed:27072286).</text>
</comment>
<comment type="pathway">
    <text evidence="5">Antibiotic biosynthesis.</text>
</comment>
<comment type="subcellular location">
    <subcellularLocation>
        <location evidence="1">Nucleus</location>
    </subcellularLocation>
</comment>
<organism>
    <name type="scientific">Sordaria araneosa</name>
    <name type="common">Pleurage araneosa</name>
    <dbReference type="NCBI Taxonomy" id="573841"/>
    <lineage>
        <taxon>Eukaryota</taxon>
        <taxon>Fungi</taxon>
        <taxon>Dikarya</taxon>
        <taxon>Ascomycota</taxon>
        <taxon>Pezizomycotina</taxon>
        <taxon>Sordariomycetes</taxon>
        <taxon>Sordariomycetidae</taxon>
        <taxon>Sordariales</taxon>
        <taxon>Sordariaceae</taxon>
        <taxon>Sordaria</taxon>
    </lineage>
</organism>
<dbReference type="EMBL" id="LC079035">
    <property type="protein sequence ID" value="BAV32163.1"/>
    <property type="molecule type" value="Genomic_DNA"/>
</dbReference>
<dbReference type="GO" id="GO:0005634">
    <property type="term" value="C:nucleus"/>
    <property type="evidence" value="ECO:0007669"/>
    <property type="project" value="UniProtKB-SubCell"/>
</dbReference>
<dbReference type="GO" id="GO:0003677">
    <property type="term" value="F:DNA binding"/>
    <property type="evidence" value="ECO:0007669"/>
    <property type="project" value="UniProtKB-KW"/>
</dbReference>
<dbReference type="GO" id="GO:0000981">
    <property type="term" value="F:DNA-binding transcription factor activity, RNA polymerase II-specific"/>
    <property type="evidence" value="ECO:0007669"/>
    <property type="project" value="InterPro"/>
</dbReference>
<dbReference type="GO" id="GO:0008270">
    <property type="term" value="F:zinc ion binding"/>
    <property type="evidence" value="ECO:0007669"/>
    <property type="project" value="InterPro"/>
</dbReference>
<dbReference type="GO" id="GO:0017000">
    <property type="term" value="P:antibiotic biosynthetic process"/>
    <property type="evidence" value="ECO:0007669"/>
    <property type="project" value="UniProtKB-KW"/>
</dbReference>
<dbReference type="CDD" id="cd12148">
    <property type="entry name" value="fungal_TF_MHR"/>
    <property type="match status" value="1"/>
</dbReference>
<dbReference type="CDD" id="cd00067">
    <property type="entry name" value="GAL4"/>
    <property type="match status" value="1"/>
</dbReference>
<dbReference type="Gene3D" id="4.10.240.10">
    <property type="entry name" value="Zn(2)-C6 fungal-type DNA-binding domain"/>
    <property type="match status" value="1"/>
</dbReference>
<dbReference type="InterPro" id="IPR036864">
    <property type="entry name" value="Zn2-C6_fun-type_DNA-bd_sf"/>
</dbReference>
<dbReference type="InterPro" id="IPR001138">
    <property type="entry name" value="Zn2Cys6_DnaBD"/>
</dbReference>
<dbReference type="PANTHER" id="PTHR47840:SF1">
    <property type="entry name" value="ZN(II)2CYS6 TRANSCRIPTION FACTOR (EUROFUNG)"/>
    <property type="match status" value="1"/>
</dbReference>
<dbReference type="PANTHER" id="PTHR47840">
    <property type="entry name" value="ZN(II)2CYS6 TRANSCRIPTION FACTOR (EUROFUNG)-RELATED"/>
    <property type="match status" value="1"/>
</dbReference>
<dbReference type="Pfam" id="PF00172">
    <property type="entry name" value="Zn_clus"/>
    <property type="match status" value="1"/>
</dbReference>
<dbReference type="SMART" id="SM00066">
    <property type="entry name" value="GAL4"/>
    <property type="match status" value="1"/>
</dbReference>
<dbReference type="SUPFAM" id="SSF57701">
    <property type="entry name" value="Zn2/Cys6 DNA-binding domain"/>
    <property type="match status" value="1"/>
</dbReference>
<dbReference type="PROSITE" id="PS00463">
    <property type="entry name" value="ZN2_CY6_FUNGAL_1"/>
    <property type="match status" value="1"/>
</dbReference>
<dbReference type="PROSITE" id="PS50048">
    <property type="entry name" value="ZN2_CY6_FUNGAL_2"/>
    <property type="match status" value="1"/>
</dbReference>
<reference key="1">
    <citation type="journal article" date="2016" name="J. Antibiot.">
        <title>Genome mining of the sordarin biosynthetic gene cluster from Sordaria araneosa Cain ATCC 36386: characterization of cycloaraneosene synthase and GDP-6-deoxyaltrose transferase.</title>
        <authorList>
            <person name="Kudo F."/>
            <person name="Matsuura Y."/>
            <person name="Hayashi T."/>
            <person name="Fukushima M."/>
            <person name="Eguchi T."/>
        </authorList>
    </citation>
    <scope>NUCLEOTIDE SEQUENCE [GENOMIC DNA]</scope>
    <scope>FUNCTION</scope>
    <scope>PATHWAY</scope>
    <source>
        <strain>ATCC 36386 / NRRL 3196</strain>
    </source>
</reference>
<name>SDNS_SORAA</name>